<evidence type="ECO:0000250" key="1"/>
<evidence type="ECO:0000303" key="2">
    <source>
    </source>
</evidence>
<evidence type="ECO:0000305" key="3"/>
<comment type="function">
    <text evidence="1">Conantokins inhibit N-methyl-D-aspartate (NMDA) receptors.</text>
</comment>
<comment type="subcellular location">
    <subcellularLocation>
        <location evidence="1">Secreted</location>
    </subcellularLocation>
</comment>
<comment type="tissue specificity">
    <text evidence="3">Expressed by the venom duct.</text>
</comment>
<comment type="miscellaneous">
    <text evidence="3">The mature peptide does not contain cysteine residue.</text>
</comment>
<sequence length="17" mass="2023">GYEEREIAETVRELEEA</sequence>
<reference key="1">
    <citation type="journal article" date="2006" name="Prog. Mol. Subcell. Biol.">
        <title>Hyperhydroxylation: a new strategy for neuronal targeting by venomous marine molluscs.</title>
        <authorList>
            <person name="Franco A."/>
            <person name="Pisarewicz K."/>
            <person name="Moller C."/>
            <person name="Mora D."/>
            <person name="Fields G.B."/>
            <person name="Mari F."/>
        </authorList>
    </citation>
    <scope>REVIEW</scope>
    <scope>GAMMA-CARBOXYGLUTAMATION AT GLU-3; GLU-4; GLU-6; GLU-9 AND GLU-13</scope>
</reference>
<dbReference type="GO" id="GO:0005576">
    <property type="term" value="C:extracellular region"/>
    <property type="evidence" value="ECO:0007669"/>
    <property type="project" value="UniProtKB-SubCell"/>
</dbReference>
<dbReference type="GO" id="GO:0035792">
    <property type="term" value="C:host cell postsynaptic membrane"/>
    <property type="evidence" value="ECO:0007669"/>
    <property type="project" value="UniProtKB-KW"/>
</dbReference>
<dbReference type="GO" id="GO:0099106">
    <property type="term" value="F:ion channel regulator activity"/>
    <property type="evidence" value="ECO:0007669"/>
    <property type="project" value="UniProtKB-KW"/>
</dbReference>
<dbReference type="GO" id="GO:0090729">
    <property type="term" value="F:toxin activity"/>
    <property type="evidence" value="ECO:0007669"/>
    <property type="project" value="UniProtKB-KW"/>
</dbReference>
<name>CKC_CONCB</name>
<organism>
    <name type="scientific">Conus caracteristicus</name>
    <name type="common">Characteristic cone</name>
    <dbReference type="NCBI Taxonomy" id="89440"/>
    <lineage>
        <taxon>Eukaryota</taxon>
        <taxon>Metazoa</taxon>
        <taxon>Spiralia</taxon>
        <taxon>Lophotrochozoa</taxon>
        <taxon>Mollusca</taxon>
        <taxon>Gastropoda</taxon>
        <taxon>Caenogastropoda</taxon>
        <taxon>Neogastropoda</taxon>
        <taxon>Conoidea</taxon>
        <taxon>Conidae</taxon>
        <taxon>Conus</taxon>
    </lineage>
</organism>
<feature type="peptide" id="PRO_0000439372" description="Conantokin-Ca2">
    <location>
        <begin position="1"/>
        <end position="17"/>
    </location>
</feature>
<feature type="modified residue" description="4-carboxyglutamate" evidence="2">
    <location>
        <position position="3"/>
    </location>
</feature>
<feature type="modified residue" description="4-carboxyglutamate" evidence="2">
    <location>
        <position position="4"/>
    </location>
</feature>
<feature type="modified residue" description="4-carboxyglutamate" evidence="2">
    <location>
        <position position="6"/>
    </location>
</feature>
<feature type="modified residue" description="4-carboxyglutamate" evidence="2">
    <location>
        <position position="9"/>
    </location>
</feature>
<feature type="modified residue" description="4-carboxyglutamate" evidence="2">
    <location>
        <position position="13"/>
    </location>
</feature>
<accession>P0DOZ5</accession>
<keyword id="KW-0301">Gamma-carboxyglutamic acid</keyword>
<keyword id="KW-0872">Ion channel impairing toxin</keyword>
<keyword id="KW-1028">Ionotropic glutamate receptor inhibitor</keyword>
<keyword id="KW-0528">Neurotoxin</keyword>
<keyword id="KW-0629">Postsynaptic neurotoxin</keyword>
<keyword id="KW-0964">Secreted</keyword>
<keyword id="KW-0800">Toxin</keyword>
<protein>
    <recommendedName>
        <fullName evidence="2">Conantokin-Ca2</fullName>
        <shortName evidence="2">Con-Ca2</shortName>
    </recommendedName>
</protein>
<proteinExistence type="evidence at protein level"/>